<keyword id="KW-0067">ATP-binding</keyword>
<keyword id="KW-0963">Cytoplasm</keyword>
<keyword id="KW-0238">DNA-binding</keyword>
<keyword id="KW-0413">Isomerase</keyword>
<keyword id="KW-0547">Nucleotide-binding</keyword>
<keyword id="KW-1185">Reference proteome</keyword>
<keyword id="KW-0799">Topoisomerase</keyword>
<organism>
    <name type="scientific">Lawsonia intracellularis (strain PHE/MN1-00)</name>
    <dbReference type="NCBI Taxonomy" id="363253"/>
    <lineage>
        <taxon>Bacteria</taxon>
        <taxon>Pseudomonadati</taxon>
        <taxon>Thermodesulfobacteriota</taxon>
        <taxon>Desulfovibrionia</taxon>
        <taxon>Desulfovibrionales</taxon>
        <taxon>Desulfovibrionaceae</taxon>
        <taxon>Lawsonia</taxon>
    </lineage>
</organism>
<name>GYRA_LAWIP</name>
<protein>
    <recommendedName>
        <fullName evidence="1">DNA gyrase subunit A</fullName>
        <ecNumber evidence="1">5.6.2.2</ecNumber>
    </recommendedName>
</protein>
<accession>Q1MQ89</accession>
<sequence length="820" mass="91735">MSQTEHHISIEQEMRKSYLEYSLSVIIGRAIPDVRDGLKPVHRRILFAQQELGNSYTRPPKKCARIVGDVIGKYHPHGDSAVYDALVRMAQDFSMRDPLEEGQGNFGSIDGDAPAAMRYTEVRMSRLASEFLSDIDKETVDFRPNYDNSLEEPIVLPTKVPNLLLNGSSGIAVGMATNIPPHNLGELCNALLKIIDDPDVPIDNLLNIIHGPDFPTGGFIYVGQGLYDAYTKGRGTVKVRGKVEIEERKKGAQSIVIREIPFGLNKSSLVEKIAILVNERKIDGIADLRDESDRKGIRVVIELKKGVIPEIIINALYKFTPLETSFGINMLAVVDNRPQLLTIKSALTYFLDHRREVIVRRTRFELNKAEARLHILIGLIHALDHIDEVVNLIRSSSTPAEAKIRLIERFSLSEIQAQSILDMRLQRLTGLEREKLEEEMHELQTKIAWYESILGDTKILWGVIRDEVTGIKEMYTTPRRTEVIRETLTNIEIEDLIPDDDVVITLSRRGYIKRTNLAIYQQQRRGGKGVAGLHTSEDDFVQEFITTTNHQFLLLFTNKGRMHQLKVHQVPEGSRTAKGTHIANIVPLEKEEWVTTILTVREFSDNKFFLFATRKGMVKRSSASYYARSRRTGLLAVGLREDDELIMVKEVTNNDFIVLATAEGFAIRFSCEDVRNMGRGAAGVKGIALRPGDSVVACLILQEKQDTPAIMTVSNLGYGKRTSIDLYRVQTRGGKGIINFKVTQKTGLVIGAKPVSDDNALVLLTSTNKIIRMSVDEVRSAGRATMGVRLVKLDDGAYVVGFDTVDGTVDDSCDDATINT</sequence>
<dbReference type="EC" id="5.6.2.2" evidence="1"/>
<dbReference type="EMBL" id="AM180252">
    <property type="protein sequence ID" value="CAJ54838.1"/>
    <property type="molecule type" value="Genomic_DNA"/>
</dbReference>
<dbReference type="RefSeq" id="WP_011526867.1">
    <property type="nucleotide sequence ID" value="NC_008011.1"/>
</dbReference>
<dbReference type="SMR" id="Q1MQ89"/>
<dbReference type="STRING" id="363253.LI0784"/>
<dbReference type="KEGG" id="lip:LI0784"/>
<dbReference type="eggNOG" id="COG0188">
    <property type="taxonomic scope" value="Bacteria"/>
</dbReference>
<dbReference type="HOGENOM" id="CLU_002977_6_1_7"/>
<dbReference type="OrthoDB" id="9806486at2"/>
<dbReference type="Proteomes" id="UP000002430">
    <property type="component" value="Chromosome"/>
</dbReference>
<dbReference type="GO" id="GO:0005694">
    <property type="term" value="C:chromosome"/>
    <property type="evidence" value="ECO:0007669"/>
    <property type="project" value="InterPro"/>
</dbReference>
<dbReference type="GO" id="GO:0005737">
    <property type="term" value="C:cytoplasm"/>
    <property type="evidence" value="ECO:0007669"/>
    <property type="project" value="UniProtKB-SubCell"/>
</dbReference>
<dbReference type="GO" id="GO:0009330">
    <property type="term" value="C:DNA topoisomerase type II (double strand cut, ATP-hydrolyzing) complex"/>
    <property type="evidence" value="ECO:0007669"/>
    <property type="project" value="TreeGrafter"/>
</dbReference>
<dbReference type="GO" id="GO:0005524">
    <property type="term" value="F:ATP binding"/>
    <property type="evidence" value="ECO:0007669"/>
    <property type="project" value="UniProtKB-UniRule"/>
</dbReference>
<dbReference type="GO" id="GO:0003677">
    <property type="term" value="F:DNA binding"/>
    <property type="evidence" value="ECO:0007669"/>
    <property type="project" value="UniProtKB-UniRule"/>
</dbReference>
<dbReference type="GO" id="GO:0034335">
    <property type="term" value="F:DNA negative supercoiling activity"/>
    <property type="evidence" value="ECO:0007669"/>
    <property type="project" value="UniProtKB-ARBA"/>
</dbReference>
<dbReference type="GO" id="GO:0006265">
    <property type="term" value="P:DNA topological change"/>
    <property type="evidence" value="ECO:0007669"/>
    <property type="project" value="UniProtKB-UniRule"/>
</dbReference>
<dbReference type="GO" id="GO:0006261">
    <property type="term" value="P:DNA-templated DNA replication"/>
    <property type="evidence" value="ECO:0007669"/>
    <property type="project" value="UniProtKB-UniRule"/>
</dbReference>
<dbReference type="CDD" id="cd00187">
    <property type="entry name" value="TOP4c"/>
    <property type="match status" value="1"/>
</dbReference>
<dbReference type="FunFam" id="1.10.268.10:FF:000001">
    <property type="entry name" value="DNA gyrase subunit A"/>
    <property type="match status" value="1"/>
</dbReference>
<dbReference type="FunFam" id="3.30.1360.40:FF:000002">
    <property type="entry name" value="DNA gyrase subunit A"/>
    <property type="match status" value="1"/>
</dbReference>
<dbReference type="FunFam" id="3.90.199.10:FF:000001">
    <property type="entry name" value="DNA gyrase subunit A"/>
    <property type="match status" value="1"/>
</dbReference>
<dbReference type="FunFam" id="2.120.10.90:FF:000005">
    <property type="entry name" value="DNA topoisomerase 4 subunit A"/>
    <property type="match status" value="1"/>
</dbReference>
<dbReference type="Gene3D" id="3.30.1360.40">
    <property type="match status" value="1"/>
</dbReference>
<dbReference type="Gene3D" id="2.120.10.90">
    <property type="entry name" value="DNA gyrase/topoisomerase IV, subunit A, C-terminal"/>
    <property type="match status" value="1"/>
</dbReference>
<dbReference type="Gene3D" id="3.90.199.10">
    <property type="entry name" value="Topoisomerase II, domain 5"/>
    <property type="match status" value="1"/>
</dbReference>
<dbReference type="Gene3D" id="1.10.268.10">
    <property type="entry name" value="Topoisomerase, domain 3"/>
    <property type="match status" value="1"/>
</dbReference>
<dbReference type="HAMAP" id="MF_01897">
    <property type="entry name" value="GyrA"/>
    <property type="match status" value="1"/>
</dbReference>
<dbReference type="InterPro" id="IPR005743">
    <property type="entry name" value="GyrA"/>
</dbReference>
<dbReference type="InterPro" id="IPR006691">
    <property type="entry name" value="GyrA/parC_rep"/>
</dbReference>
<dbReference type="InterPro" id="IPR035516">
    <property type="entry name" value="Gyrase/topoIV_suA_C"/>
</dbReference>
<dbReference type="InterPro" id="IPR013760">
    <property type="entry name" value="Topo_IIA-like_dom_sf"/>
</dbReference>
<dbReference type="InterPro" id="IPR013758">
    <property type="entry name" value="Topo_IIA_A/C_ab"/>
</dbReference>
<dbReference type="InterPro" id="IPR013757">
    <property type="entry name" value="Topo_IIA_A_a_sf"/>
</dbReference>
<dbReference type="InterPro" id="IPR002205">
    <property type="entry name" value="Topo_IIA_dom_A"/>
</dbReference>
<dbReference type="InterPro" id="IPR050220">
    <property type="entry name" value="Type_II_DNA_Topoisomerases"/>
</dbReference>
<dbReference type="NCBIfam" id="TIGR01063">
    <property type="entry name" value="gyrA"/>
    <property type="match status" value="1"/>
</dbReference>
<dbReference type="NCBIfam" id="NF004043">
    <property type="entry name" value="PRK05560.1"/>
    <property type="match status" value="1"/>
</dbReference>
<dbReference type="NCBIfam" id="NF004044">
    <property type="entry name" value="PRK05561.1"/>
    <property type="match status" value="1"/>
</dbReference>
<dbReference type="PANTHER" id="PTHR43493:SF5">
    <property type="entry name" value="DNA GYRASE SUBUNIT A, CHLOROPLASTIC_MITOCHONDRIAL"/>
    <property type="match status" value="1"/>
</dbReference>
<dbReference type="PANTHER" id="PTHR43493">
    <property type="entry name" value="DNA GYRASE/TOPOISOMERASE SUBUNIT A"/>
    <property type="match status" value="1"/>
</dbReference>
<dbReference type="Pfam" id="PF03989">
    <property type="entry name" value="DNA_gyraseA_C"/>
    <property type="match status" value="6"/>
</dbReference>
<dbReference type="Pfam" id="PF00521">
    <property type="entry name" value="DNA_topoisoIV"/>
    <property type="match status" value="1"/>
</dbReference>
<dbReference type="SMART" id="SM00434">
    <property type="entry name" value="TOP4c"/>
    <property type="match status" value="1"/>
</dbReference>
<dbReference type="SUPFAM" id="SSF101904">
    <property type="entry name" value="GyrA/ParC C-terminal domain-like"/>
    <property type="match status" value="1"/>
</dbReference>
<dbReference type="SUPFAM" id="SSF56719">
    <property type="entry name" value="Type II DNA topoisomerase"/>
    <property type="match status" value="1"/>
</dbReference>
<dbReference type="PROSITE" id="PS52040">
    <property type="entry name" value="TOPO_IIA"/>
    <property type="match status" value="1"/>
</dbReference>
<evidence type="ECO:0000255" key="1">
    <source>
        <dbReference type="HAMAP-Rule" id="MF_01897"/>
    </source>
</evidence>
<evidence type="ECO:0000255" key="2">
    <source>
        <dbReference type="PROSITE-ProRule" id="PRU01384"/>
    </source>
</evidence>
<gene>
    <name evidence="1" type="primary">gyrA</name>
    <name type="ordered locus">LI0784</name>
</gene>
<reference key="1">
    <citation type="submission" date="2005-11" db="EMBL/GenBank/DDBJ databases">
        <title>The complete genome sequence of Lawsonia intracellularis: the causative agent of proliferative enteropathy.</title>
        <authorList>
            <person name="Kaur K."/>
            <person name="Zhang Q."/>
            <person name="Beckler D."/>
            <person name="Munir S."/>
            <person name="Li L."/>
            <person name="Kinsley K."/>
            <person name="Herron L."/>
            <person name="Peterson A."/>
            <person name="May B."/>
            <person name="Singh S."/>
            <person name="Gebhart C."/>
            <person name="Kapur V."/>
        </authorList>
    </citation>
    <scope>NUCLEOTIDE SEQUENCE [LARGE SCALE GENOMIC DNA]</scope>
    <source>
        <strain>PHE/MN1-00</strain>
    </source>
</reference>
<feature type="chain" id="PRO_0000409827" description="DNA gyrase subunit A">
    <location>
        <begin position="1"/>
        <end position="820"/>
    </location>
</feature>
<feature type="domain" description="Topo IIA-type catalytic" evidence="2">
    <location>
        <begin position="31"/>
        <end position="496"/>
    </location>
</feature>
<feature type="short sequence motif" description="GyrA-box" evidence="1">
    <location>
        <begin position="523"/>
        <end position="529"/>
    </location>
</feature>
<feature type="active site" description="O-(5'-phospho-DNA)-tyrosine intermediate" evidence="1">
    <location>
        <position position="119"/>
    </location>
</feature>
<comment type="function">
    <text evidence="1">A type II topoisomerase that negatively supercoils closed circular double-stranded (ds) DNA in an ATP-dependent manner to modulate DNA topology and maintain chromosomes in an underwound state. Negative supercoiling favors strand separation, and DNA replication, transcription, recombination and repair, all of which involve strand separation. Also able to catalyze the interconversion of other topological isomers of dsDNA rings, including catenanes and knotted rings. Type II topoisomerases break and join 2 DNA strands simultaneously in an ATP-dependent manner.</text>
</comment>
<comment type="catalytic activity">
    <reaction evidence="1">
        <text>ATP-dependent breakage, passage and rejoining of double-stranded DNA.</text>
        <dbReference type="EC" id="5.6.2.2"/>
    </reaction>
</comment>
<comment type="subunit">
    <text evidence="1">Heterotetramer, composed of two GyrA and two GyrB chains. In the heterotetramer, GyrA contains the active site tyrosine that forms a transient covalent intermediate with DNA, while GyrB binds cofactors and catalyzes ATP hydrolysis.</text>
</comment>
<comment type="subcellular location">
    <subcellularLocation>
        <location evidence="1">Cytoplasm</location>
    </subcellularLocation>
</comment>
<comment type="miscellaneous">
    <text evidence="1">Few gyrases are as efficient as E.coli at forming negative supercoils. Not all organisms have 2 type II topoisomerases; in organisms with a single type II topoisomerase this enzyme also has to decatenate newly replicated chromosomes.</text>
</comment>
<comment type="similarity">
    <text evidence="1">Belongs to the type II topoisomerase GyrA/ParC subunit family.</text>
</comment>
<proteinExistence type="inferred from homology"/>